<geneLocation type="mitochondrion"/>
<name>COX2_CAVAP</name>
<feature type="chain" id="PRO_0000183541" description="Cytochrome c oxidase subunit 2">
    <location>
        <begin position="1"/>
        <end position="227"/>
    </location>
</feature>
<feature type="topological domain" description="Mitochondrial intermembrane" evidence="3">
    <location>
        <begin position="1"/>
        <end position="14"/>
    </location>
</feature>
<feature type="transmembrane region" description="Helical; Name=I" evidence="3">
    <location>
        <begin position="15"/>
        <end position="45"/>
    </location>
</feature>
<feature type="topological domain" description="Mitochondrial matrix" evidence="3">
    <location>
        <begin position="46"/>
        <end position="59"/>
    </location>
</feature>
<feature type="transmembrane region" description="Helical; Name=II" evidence="3">
    <location>
        <begin position="60"/>
        <end position="87"/>
    </location>
</feature>
<feature type="topological domain" description="Mitochondrial intermembrane" evidence="3">
    <location>
        <begin position="88"/>
        <end position="227"/>
    </location>
</feature>
<feature type="binding site" evidence="3">
    <location>
        <position position="161"/>
    </location>
    <ligand>
        <name>Cu cation</name>
        <dbReference type="ChEBI" id="CHEBI:23378"/>
        <label>A1</label>
    </ligand>
</feature>
<feature type="binding site" evidence="3">
    <location>
        <position position="196"/>
    </location>
    <ligand>
        <name>Cu cation</name>
        <dbReference type="ChEBI" id="CHEBI:23378"/>
        <label>A1</label>
    </ligand>
</feature>
<feature type="binding site" evidence="3">
    <location>
        <position position="196"/>
    </location>
    <ligand>
        <name>Cu cation</name>
        <dbReference type="ChEBI" id="CHEBI:23378"/>
        <label>A2</label>
    </ligand>
</feature>
<feature type="binding site" evidence="3">
    <location>
        <position position="198"/>
    </location>
    <ligand>
        <name>Cu cation</name>
        <dbReference type="ChEBI" id="CHEBI:23378"/>
        <label>A2</label>
    </ligand>
</feature>
<feature type="binding site" evidence="3">
    <location>
        <position position="198"/>
    </location>
    <ligand>
        <name>Mg(2+)</name>
        <dbReference type="ChEBI" id="CHEBI:18420"/>
        <note>ligand shared with MT-CO1</note>
    </ligand>
</feature>
<feature type="binding site" evidence="3">
    <location>
        <position position="200"/>
    </location>
    <ligand>
        <name>Cu cation</name>
        <dbReference type="ChEBI" id="CHEBI:23378"/>
        <label>A1</label>
    </ligand>
</feature>
<feature type="binding site" evidence="3">
    <location>
        <position position="200"/>
    </location>
    <ligand>
        <name>Cu cation</name>
        <dbReference type="ChEBI" id="CHEBI:23378"/>
        <label>A2</label>
    </ligand>
</feature>
<feature type="binding site" evidence="3">
    <location>
        <position position="204"/>
    </location>
    <ligand>
        <name>Cu cation</name>
        <dbReference type="ChEBI" id="CHEBI:23378"/>
        <label>A2</label>
    </ligand>
</feature>
<feature type="binding site" evidence="3">
    <location>
        <position position="207"/>
    </location>
    <ligand>
        <name>Cu cation</name>
        <dbReference type="ChEBI" id="CHEBI:23378"/>
        <label>A1</label>
    </ligand>
</feature>
<keyword id="KW-0186">Copper</keyword>
<keyword id="KW-0249">Electron transport</keyword>
<keyword id="KW-0460">Magnesium</keyword>
<keyword id="KW-0472">Membrane</keyword>
<keyword id="KW-0479">Metal-binding</keyword>
<keyword id="KW-0496">Mitochondrion</keyword>
<keyword id="KW-0999">Mitochondrion inner membrane</keyword>
<keyword id="KW-0679">Respiratory chain</keyword>
<keyword id="KW-1278">Translocase</keyword>
<keyword id="KW-0812">Transmembrane</keyword>
<keyword id="KW-1133">Transmembrane helix</keyword>
<keyword id="KW-0813">Transport</keyword>
<comment type="function">
    <text evidence="2">Component of the cytochrome c oxidase, the last enzyme in the mitochondrial electron transport chain which drives oxidative phosphorylation. The respiratory chain contains 3 multisubunit complexes succinate dehydrogenase (complex II, CII), ubiquinol-cytochrome c oxidoreductase (cytochrome b-c1 complex, complex III, CIII) and cytochrome c oxidase (complex IV, CIV), that cooperate to transfer electrons derived from NADH and succinate to molecular oxygen, creating an electrochemical gradient over the inner membrane that drives transmembrane transport and the ATP synthase. Cytochrome c oxidase is the component of the respiratory chain that catalyzes the reduction of oxygen to water. Electrons originating from reduced cytochrome c in the intermembrane space (IMS) are transferred via the dinuclear copper A center (CU(A)) of subunit 2 and heme A of subunit 1 to the active site in subunit 1, a binuclear center (BNC) formed by heme A3 and copper B (CU(B)). The BNC reduces molecular oxygen to 2 water molecules using 4 electrons from cytochrome c in the IMS and 4 protons from the mitochondrial matrix.</text>
</comment>
<comment type="catalytic activity">
    <reaction evidence="2">
        <text>4 Fe(II)-[cytochrome c] + O2 + 8 H(+)(in) = 4 Fe(III)-[cytochrome c] + 2 H2O + 4 H(+)(out)</text>
        <dbReference type="Rhea" id="RHEA:11436"/>
        <dbReference type="Rhea" id="RHEA-COMP:10350"/>
        <dbReference type="Rhea" id="RHEA-COMP:14399"/>
        <dbReference type="ChEBI" id="CHEBI:15377"/>
        <dbReference type="ChEBI" id="CHEBI:15378"/>
        <dbReference type="ChEBI" id="CHEBI:15379"/>
        <dbReference type="ChEBI" id="CHEBI:29033"/>
        <dbReference type="ChEBI" id="CHEBI:29034"/>
        <dbReference type="EC" id="7.1.1.9"/>
    </reaction>
    <physiologicalReaction direction="left-to-right" evidence="2">
        <dbReference type="Rhea" id="RHEA:11437"/>
    </physiologicalReaction>
</comment>
<comment type="cofactor">
    <cofactor evidence="3">
        <name>Cu cation</name>
        <dbReference type="ChEBI" id="CHEBI:23378"/>
    </cofactor>
    <text evidence="3">Binds a dinuclear copper A center per subunit.</text>
</comment>
<comment type="subunit">
    <text evidence="1 3">Component of the cytochrome c oxidase (complex IV, CIV), a multisubunit enzyme composed of 14 subunits. The complex is composed of a catalytic core of 3 subunits MT-CO1, MT-CO2 and MT-CO3, encoded in the mitochondrial DNA, and 11 supernumerary subunits COX4I, COX5A, COX5B, COX6A, COX6B, COX6C, COX7A, COX7B, COX7C, COX8 and NDUFA4, which are encoded in the nuclear genome. The complex exists as a monomer or a dimer and forms supercomplexes (SCs) in the inner mitochondrial membrane with NADH-ubiquinone oxidoreductase (complex I, CI) and ubiquinol-cytochrome c oxidoreductase (cytochrome b-c1 complex, complex III, CIII), resulting in different assemblies (supercomplex SCI(1)III(2)IV(1) and megacomplex MCI(2)III(2)IV(2)) (By similarity). Found in a complex with TMEM177, COA6, COX18, COX20, SCO1 and SCO2. Interacts with TMEM177 in a COX20-dependent manner. Interacts with COX20. Interacts with COX16 (By similarity).</text>
</comment>
<comment type="subcellular location">
    <subcellularLocation>
        <location evidence="3">Mitochondrion inner membrane</location>
        <topology evidence="3">Multi-pass membrane protein</topology>
    </subcellularLocation>
</comment>
<comment type="similarity">
    <text evidence="4">Belongs to the cytochrome c oxidase subunit 2 family.</text>
</comment>
<sequence>MAYPYELGFQDASSPIMEELLHFHDHTLMIVFLISTLVLYLITIMLTTKLTHTSTMDAQEIETIWTILPAIILILIALPSLRILYMMDEINSPSLTVKTMGHQWYWSYEYTDYEELSFDSYMVPTMDLKPGELRLLEVDNRVVLPMEMPVRMLISSEDVLHSWAVPSLGLKTDAIPGRLNQATLMSSRPGLYYGQCSEICGSNHSFMPIVLEMVPLKDFEIWSSSML</sequence>
<gene>
    <name type="primary">MT-CO2</name>
    <name type="synonym">COII</name>
    <name type="synonym">COX2</name>
    <name type="synonym">COXII</name>
    <name type="synonym">MTCO2</name>
</gene>
<dbReference type="EC" id="7.1.1.9"/>
<dbReference type="EMBL" id="U18838">
    <property type="protein sequence ID" value="AAA75609.1"/>
    <property type="molecule type" value="Genomic_DNA"/>
</dbReference>
<dbReference type="PIR" id="I48072">
    <property type="entry name" value="I48072"/>
</dbReference>
<dbReference type="SMR" id="P50683"/>
<dbReference type="GO" id="GO:0005743">
    <property type="term" value="C:mitochondrial inner membrane"/>
    <property type="evidence" value="ECO:0007669"/>
    <property type="project" value="UniProtKB-SubCell"/>
</dbReference>
<dbReference type="GO" id="GO:0045277">
    <property type="term" value="C:respiratory chain complex IV"/>
    <property type="evidence" value="ECO:0000250"/>
    <property type="project" value="UniProtKB"/>
</dbReference>
<dbReference type="GO" id="GO:0005507">
    <property type="term" value="F:copper ion binding"/>
    <property type="evidence" value="ECO:0007669"/>
    <property type="project" value="InterPro"/>
</dbReference>
<dbReference type="GO" id="GO:0004129">
    <property type="term" value="F:cytochrome-c oxidase activity"/>
    <property type="evidence" value="ECO:0007669"/>
    <property type="project" value="UniProtKB-EC"/>
</dbReference>
<dbReference type="GO" id="GO:0042773">
    <property type="term" value="P:ATP synthesis coupled electron transport"/>
    <property type="evidence" value="ECO:0007669"/>
    <property type="project" value="TreeGrafter"/>
</dbReference>
<dbReference type="CDD" id="cd13912">
    <property type="entry name" value="CcO_II_C"/>
    <property type="match status" value="1"/>
</dbReference>
<dbReference type="FunFam" id="1.10.287.90:FF:000001">
    <property type="entry name" value="Cytochrome c oxidase subunit 2"/>
    <property type="match status" value="1"/>
</dbReference>
<dbReference type="FunFam" id="2.60.40.420:FF:000001">
    <property type="entry name" value="Cytochrome c oxidase subunit 2"/>
    <property type="match status" value="1"/>
</dbReference>
<dbReference type="Gene3D" id="1.10.287.90">
    <property type="match status" value="1"/>
</dbReference>
<dbReference type="Gene3D" id="2.60.40.420">
    <property type="entry name" value="Cupredoxins - blue copper proteins"/>
    <property type="match status" value="1"/>
</dbReference>
<dbReference type="InterPro" id="IPR045187">
    <property type="entry name" value="CcO_II"/>
</dbReference>
<dbReference type="InterPro" id="IPR002429">
    <property type="entry name" value="CcO_II-like_C"/>
</dbReference>
<dbReference type="InterPro" id="IPR034210">
    <property type="entry name" value="CcO_II_C"/>
</dbReference>
<dbReference type="InterPro" id="IPR001505">
    <property type="entry name" value="Copper_CuA"/>
</dbReference>
<dbReference type="InterPro" id="IPR008972">
    <property type="entry name" value="Cupredoxin"/>
</dbReference>
<dbReference type="InterPro" id="IPR014222">
    <property type="entry name" value="Cyt_c_oxidase_su2"/>
</dbReference>
<dbReference type="InterPro" id="IPR011759">
    <property type="entry name" value="Cyt_c_oxidase_su2_TM_dom"/>
</dbReference>
<dbReference type="InterPro" id="IPR036257">
    <property type="entry name" value="Cyt_c_oxidase_su2_TM_sf"/>
</dbReference>
<dbReference type="NCBIfam" id="TIGR02866">
    <property type="entry name" value="CoxB"/>
    <property type="match status" value="1"/>
</dbReference>
<dbReference type="PANTHER" id="PTHR22888:SF9">
    <property type="entry name" value="CYTOCHROME C OXIDASE SUBUNIT 2"/>
    <property type="match status" value="1"/>
</dbReference>
<dbReference type="PANTHER" id="PTHR22888">
    <property type="entry name" value="CYTOCHROME C OXIDASE, SUBUNIT II"/>
    <property type="match status" value="1"/>
</dbReference>
<dbReference type="Pfam" id="PF00116">
    <property type="entry name" value="COX2"/>
    <property type="match status" value="1"/>
</dbReference>
<dbReference type="Pfam" id="PF02790">
    <property type="entry name" value="COX2_TM"/>
    <property type="match status" value="1"/>
</dbReference>
<dbReference type="PRINTS" id="PR01166">
    <property type="entry name" value="CYCOXIDASEII"/>
</dbReference>
<dbReference type="SUPFAM" id="SSF49503">
    <property type="entry name" value="Cupredoxins"/>
    <property type="match status" value="1"/>
</dbReference>
<dbReference type="SUPFAM" id="SSF81464">
    <property type="entry name" value="Cytochrome c oxidase subunit II-like, transmembrane region"/>
    <property type="match status" value="1"/>
</dbReference>
<dbReference type="PROSITE" id="PS00078">
    <property type="entry name" value="COX2"/>
    <property type="match status" value="1"/>
</dbReference>
<dbReference type="PROSITE" id="PS50857">
    <property type="entry name" value="COX2_CUA"/>
    <property type="match status" value="1"/>
</dbReference>
<dbReference type="PROSITE" id="PS50999">
    <property type="entry name" value="COX2_TM"/>
    <property type="match status" value="1"/>
</dbReference>
<proteinExistence type="inferred from homology"/>
<protein>
    <recommendedName>
        <fullName>Cytochrome c oxidase subunit 2</fullName>
        <ecNumber>7.1.1.9</ecNumber>
    </recommendedName>
    <alternativeName>
        <fullName>Cytochrome c oxidase polypeptide II</fullName>
    </alternativeName>
</protein>
<accession>P50683</accession>
<organism>
    <name type="scientific">Cavia aperea</name>
    <name type="common">Brazilian guinea pig</name>
    <dbReference type="NCBI Taxonomy" id="37548"/>
    <lineage>
        <taxon>Eukaryota</taxon>
        <taxon>Metazoa</taxon>
        <taxon>Chordata</taxon>
        <taxon>Craniata</taxon>
        <taxon>Vertebrata</taxon>
        <taxon>Euteleostomi</taxon>
        <taxon>Mammalia</taxon>
        <taxon>Eutheria</taxon>
        <taxon>Euarchontoglires</taxon>
        <taxon>Glires</taxon>
        <taxon>Rodentia</taxon>
        <taxon>Hystricomorpha</taxon>
        <taxon>Caviidae</taxon>
        <taxon>Cavia</taxon>
    </lineage>
</organism>
<reference key="1">
    <citation type="journal article" date="1995" name="J. Mol. Evol.">
        <title>Mammalian mitochondrial DNA evolution: a comparison of the cytochrome b and cytochrome c oxidase II genes.</title>
        <authorList>
            <person name="Honeycutt R.L."/>
            <person name="Nedbal M.A."/>
            <person name="Adkins R.M."/>
            <person name="Janecek L.L."/>
        </authorList>
    </citation>
    <scope>NUCLEOTIDE SEQUENCE [GENOMIC DNA]</scope>
</reference>
<evidence type="ECO:0000250" key="1">
    <source>
        <dbReference type="UniProtKB" id="P00403"/>
    </source>
</evidence>
<evidence type="ECO:0000250" key="2">
    <source>
        <dbReference type="UniProtKB" id="P00410"/>
    </source>
</evidence>
<evidence type="ECO:0000250" key="3">
    <source>
        <dbReference type="UniProtKB" id="P68530"/>
    </source>
</evidence>
<evidence type="ECO:0000305" key="4"/>